<accession>Q47LN7</accession>
<gene>
    <name evidence="1" type="primary">tsaD</name>
    <name type="synonym">gcp</name>
    <name type="ordered locus">Tfu_2602</name>
</gene>
<proteinExistence type="inferred from homology"/>
<reference key="1">
    <citation type="journal article" date="2007" name="J. Bacteriol.">
        <title>Genome sequence and analysis of the soil cellulolytic actinomycete Thermobifida fusca YX.</title>
        <authorList>
            <person name="Lykidis A."/>
            <person name="Mavromatis K."/>
            <person name="Ivanova N."/>
            <person name="Anderson I."/>
            <person name="Land M."/>
            <person name="DiBartolo G."/>
            <person name="Martinez M."/>
            <person name="Lapidus A."/>
            <person name="Lucas S."/>
            <person name="Copeland A."/>
            <person name="Richardson P."/>
            <person name="Wilson D.B."/>
            <person name="Kyrpides N."/>
        </authorList>
    </citation>
    <scope>NUCLEOTIDE SEQUENCE [LARGE SCALE GENOMIC DNA]</scope>
    <source>
        <strain>YX</strain>
    </source>
</reference>
<protein>
    <recommendedName>
        <fullName evidence="1">tRNA N6-adenosine threonylcarbamoyltransferase</fullName>
        <ecNumber evidence="1">2.3.1.234</ecNumber>
    </recommendedName>
    <alternativeName>
        <fullName evidence="1">N6-L-threonylcarbamoyladenine synthase</fullName>
        <shortName evidence="1">t(6)A synthase</shortName>
    </alternativeName>
    <alternativeName>
        <fullName evidence="1">t(6)A37 threonylcarbamoyladenosine biosynthesis protein TsaD</fullName>
    </alternativeName>
    <alternativeName>
        <fullName evidence="1">tRNA threonylcarbamoyladenosine biosynthesis protein TsaD</fullName>
    </alternativeName>
</protein>
<sequence length="347" mass="35951">MTTASQPPLIMGIESSCDETGVAFVRGCELLADEVASSVDEHARFGGVVPEVASRAHLEAMTPTVRRAAERAGVRLSDVDAIAVTVGPGLAGALLVGLSAAKAYALALDKPLYGVNHLVGHVAVDQLEHGPLPKPVVALLVSGGHTSLLLVRDLATDVQLLGETVDDAAGEAYDKVARLLNLPYPGGPPIDRAARDGDGTAIHFPRGKWGDGTYDFSFSGLKTAVARWVEDAERQGRPVSVPDVAAAFQEAVADVLTRKAVDACREHGVRHLVISGGVAANSRLRALAEERCAAAGIEVRVPRPRLCTDNGAMIAALGAEVVAAGLPPSPLDMAVDTSLPVSSVLVN</sequence>
<evidence type="ECO:0000255" key="1">
    <source>
        <dbReference type="HAMAP-Rule" id="MF_01445"/>
    </source>
</evidence>
<name>TSAD_THEFY</name>
<dbReference type="EC" id="2.3.1.234" evidence="1"/>
<dbReference type="EMBL" id="CP000088">
    <property type="protein sequence ID" value="AAZ56635.1"/>
    <property type="molecule type" value="Genomic_DNA"/>
</dbReference>
<dbReference type="RefSeq" id="WP_011293025.1">
    <property type="nucleotide sequence ID" value="NC_007333.1"/>
</dbReference>
<dbReference type="SMR" id="Q47LN7"/>
<dbReference type="STRING" id="269800.Tfu_2602"/>
<dbReference type="KEGG" id="tfu:Tfu_2602"/>
<dbReference type="eggNOG" id="COG0533">
    <property type="taxonomic scope" value="Bacteria"/>
</dbReference>
<dbReference type="HOGENOM" id="CLU_023208_0_2_11"/>
<dbReference type="OrthoDB" id="9806197at2"/>
<dbReference type="GO" id="GO:0005737">
    <property type="term" value="C:cytoplasm"/>
    <property type="evidence" value="ECO:0007669"/>
    <property type="project" value="UniProtKB-SubCell"/>
</dbReference>
<dbReference type="GO" id="GO:0005506">
    <property type="term" value="F:iron ion binding"/>
    <property type="evidence" value="ECO:0007669"/>
    <property type="project" value="UniProtKB-UniRule"/>
</dbReference>
<dbReference type="GO" id="GO:0061711">
    <property type="term" value="F:N(6)-L-threonylcarbamoyladenine synthase activity"/>
    <property type="evidence" value="ECO:0007669"/>
    <property type="project" value="UniProtKB-EC"/>
</dbReference>
<dbReference type="GO" id="GO:0002949">
    <property type="term" value="P:tRNA threonylcarbamoyladenosine modification"/>
    <property type="evidence" value="ECO:0007669"/>
    <property type="project" value="UniProtKB-UniRule"/>
</dbReference>
<dbReference type="CDD" id="cd24133">
    <property type="entry name" value="ASKHA_NBD_TsaD_bac"/>
    <property type="match status" value="1"/>
</dbReference>
<dbReference type="FunFam" id="3.30.420.40:FF:000012">
    <property type="entry name" value="tRNA N6-adenosine threonylcarbamoyltransferase"/>
    <property type="match status" value="1"/>
</dbReference>
<dbReference type="FunFam" id="3.30.420.40:FF:000040">
    <property type="entry name" value="tRNA N6-adenosine threonylcarbamoyltransferase"/>
    <property type="match status" value="1"/>
</dbReference>
<dbReference type="Gene3D" id="3.30.420.40">
    <property type="match status" value="2"/>
</dbReference>
<dbReference type="HAMAP" id="MF_01445">
    <property type="entry name" value="TsaD"/>
    <property type="match status" value="1"/>
</dbReference>
<dbReference type="InterPro" id="IPR043129">
    <property type="entry name" value="ATPase_NBD"/>
</dbReference>
<dbReference type="InterPro" id="IPR000905">
    <property type="entry name" value="Gcp-like_dom"/>
</dbReference>
<dbReference type="InterPro" id="IPR017861">
    <property type="entry name" value="KAE1/TsaD"/>
</dbReference>
<dbReference type="InterPro" id="IPR017860">
    <property type="entry name" value="Peptidase_M22_CS"/>
</dbReference>
<dbReference type="InterPro" id="IPR022450">
    <property type="entry name" value="TsaD"/>
</dbReference>
<dbReference type="NCBIfam" id="TIGR00329">
    <property type="entry name" value="gcp_kae1"/>
    <property type="match status" value="1"/>
</dbReference>
<dbReference type="NCBIfam" id="TIGR03723">
    <property type="entry name" value="T6A_TsaD_YgjD"/>
    <property type="match status" value="1"/>
</dbReference>
<dbReference type="PANTHER" id="PTHR11735">
    <property type="entry name" value="TRNA N6-ADENOSINE THREONYLCARBAMOYLTRANSFERASE"/>
    <property type="match status" value="1"/>
</dbReference>
<dbReference type="PANTHER" id="PTHR11735:SF6">
    <property type="entry name" value="TRNA N6-ADENOSINE THREONYLCARBAMOYLTRANSFERASE, MITOCHONDRIAL"/>
    <property type="match status" value="1"/>
</dbReference>
<dbReference type="Pfam" id="PF00814">
    <property type="entry name" value="TsaD"/>
    <property type="match status" value="1"/>
</dbReference>
<dbReference type="PRINTS" id="PR00789">
    <property type="entry name" value="OSIALOPTASE"/>
</dbReference>
<dbReference type="SUPFAM" id="SSF53067">
    <property type="entry name" value="Actin-like ATPase domain"/>
    <property type="match status" value="2"/>
</dbReference>
<dbReference type="PROSITE" id="PS01016">
    <property type="entry name" value="GLYCOPROTEASE"/>
    <property type="match status" value="1"/>
</dbReference>
<keyword id="KW-0012">Acyltransferase</keyword>
<keyword id="KW-0963">Cytoplasm</keyword>
<keyword id="KW-0408">Iron</keyword>
<keyword id="KW-0479">Metal-binding</keyword>
<keyword id="KW-0808">Transferase</keyword>
<keyword id="KW-0819">tRNA processing</keyword>
<comment type="function">
    <text evidence="1">Required for the formation of a threonylcarbamoyl group on adenosine at position 37 (t(6)A37) in tRNAs that read codons beginning with adenine. Is involved in the transfer of the threonylcarbamoyl moiety of threonylcarbamoyl-AMP (TC-AMP) to the N6 group of A37, together with TsaE and TsaB. TsaD likely plays a direct catalytic role in this reaction.</text>
</comment>
<comment type="catalytic activity">
    <reaction evidence="1">
        <text>L-threonylcarbamoyladenylate + adenosine(37) in tRNA = N(6)-L-threonylcarbamoyladenosine(37) in tRNA + AMP + H(+)</text>
        <dbReference type="Rhea" id="RHEA:37059"/>
        <dbReference type="Rhea" id="RHEA-COMP:10162"/>
        <dbReference type="Rhea" id="RHEA-COMP:10163"/>
        <dbReference type="ChEBI" id="CHEBI:15378"/>
        <dbReference type="ChEBI" id="CHEBI:73682"/>
        <dbReference type="ChEBI" id="CHEBI:74411"/>
        <dbReference type="ChEBI" id="CHEBI:74418"/>
        <dbReference type="ChEBI" id="CHEBI:456215"/>
        <dbReference type="EC" id="2.3.1.234"/>
    </reaction>
</comment>
<comment type="cofactor">
    <cofactor evidence="1">
        <name>Fe(2+)</name>
        <dbReference type="ChEBI" id="CHEBI:29033"/>
    </cofactor>
    <text evidence="1">Binds 1 Fe(2+) ion per subunit.</text>
</comment>
<comment type="subcellular location">
    <subcellularLocation>
        <location evidence="1">Cytoplasm</location>
    </subcellularLocation>
</comment>
<comment type="similarity">
    <text evidence="1">Belongs to the KAE1 / TsaD family.</text>
</comment>
<feature type="chain" id="PRO_0000303594" description="tRNA N6-adenosine threonylcarbamoyltransferase">
    <location>
        <begin position="1"/>
        <end position="347"/>
    </location>
</feature>
<feature type="binding site" evidence="1">
    <location>
        <position position="117"/>
    </location>
    <ligand>
        <name>Fe cation</name>
        <dbReference type="ChEBI" id="CHEBI:24875"/>
    </ligand>
</feature>
<feature type="binding site" evidence="1">
    <location>
        <position position="121"/>
    </location>
    <ligand>
        <name>Fe cation</name>
        <dbReference type="ChEBI" id="CHEBI:24875"/>
    </ligand>
</feature>
<feature type="binding site" evidence="1">
    <location>
        <begin position="140"/>
        <end position="144"/>
    </location>
    <ligand>
        <name>substrate</name>
    </ligand>
</feature>
<feature type="binding site" evidence="1">
    <location>
        <position position="174"/>
    </location>
    <ligand>
        <name>substrate</name>
    </ligand>
</feature>
<feature type="binding site" evidence="1">
    <location>
        <position position="187"/>
    </location>
    <ligand>
        <name>substrate</name>
    </ligand>
</feature>
<feature type="binding site" evidence="1">
    <location>
        <position position="191"/>
    </location>
    <ligand>
        <name>substrate</name>
    </ligand>
</feature>
<feature type="binding site" evidence="1">
    <location>
        <position position="281"/>
    </location>
    <ligand>
        <name>substrate</name>
    </ligand>
</feature>
<feature type="binding site" evidence="1">
    <location>
        <position position="309"/>
    </location>
    <ligand>
        <name>Fe cation</name>
        <dbReference type="ChEBI" id="CHEBI:24875"/>
    </ligand>
</feature>
<organism>
    <name type="scientific">Thermobifida fusca (strain YX)</name>
    <dbReference type="NCBI Taxonomy" id="269800"/>
    <lineage>
        <taxon>Bacteria</taxon>
        <taxon>Bacillati</taxon>
        <taxon>Actinomycetota</taxon>
        <taxon>Actinomycetes</taxon>
        <taxon>Streptosporangiales</taxon>
        <taxon>Nocardiopsidaceae</taxon>
        <taxon>Thermobifida</taxon>
    </lineage>
</organism>